<organism>
    <name type="scientific">Saccharolobus islandicus (strain Y.G.57.14 / Yellowstone #1)</name>
    <name type="common">Sulfolobus islandicus</name>
    <dbReference type="NCBI Taxonomy" id="439386"/>
    <lineage>
        <taxon>Archaea</taxon>
        <taxon>Thermoproteota</taxon>
        <taxon>Thermoprotei</taxon>
        <taxon>Sulfolobales</taxon>
        <taxon>Sulfolobaceae</taxon>
        <taxon>Saccharolobus</taxon>
    </lineage>
</organism>
<keyword id="KW-0687">Ribonucleoprotein</keyword>
<keyword id="KW-0689">Ribosomal protein</keyword>
<protein>
    <recommendedName>
        <fullName evidence="1">Large ribosomal subunit protein eL39</fullName>
    </recommendedName>
    <alternativeName>
        <fullName evidence="2">50S ribosomal protein L39e</fullName>
    </alternativeName>
</protein>
<dbReference type="EMBL" id="CP001403">
    <property type="protein sequence ID" value="ACP46125.1"/>
    <property type="molecule type" value="Genomic_DNA"/>
</dbReference>
<dbReference type="RefSeq" id="WP_009990648.1">
    <property type="nucleotide sequence ID" value="NC_012622.1"/>
</dbReference>
<dbReference type="SMR" id="C3N7D1"/>
<dbReference type="KEGG" id="siy:YG5714_1869"/>
<dbReference type="HOGENOM" id="CLU_181948_4_0_2"/>
<dbReference type="Proteomes" id="UP000002308">
    <property type="component" value="Chromosome"/>
</dbReference>
<dbReference type="GO" id="GO:0022625">
    <property type="term" value="C:cytosolic large ribosomal subunit"/>
    <property type="evidence" value="ECO:0007669"/>
    <property type="project" value="TreeGrafter"/>
</dbReference>
<dbReference type="GO" id="GO:0003735">
    <property type="term" value="F:structural constituent of ribosome"/>
    <property type="evidence" value="ECO:0007669"/>
    <property type="project" value="InterPro"/>
</dbReference>
<dbReference type="GO" id="GO:0006412">
    <property type="term" value="P:translation"/>
    <property type="evidence" value="ECO:0007669"/>
    <property type="project" value="UniProtKB-UniRule"/>
</dbReference>
<dbReference type="FunFam" id="1.10.1620.10:FF:000001">
    <property type="entry name" value="60S ribosomal protein-like L39"/>
    <property type="match status" value="1"/>
</dbReference>
<dbReference type="Gene3D" id="1.10.1620.10">
    <property type="entry name" value="Ribosomal protein L39e"/>
    <property type="match status" value="1"/>
</dbReference>
<dbReference type="HAMAP" id="MF_00629">
    <property type="entry name" value="Ribosomal_eL39"/>
    <property type="match status" value="1"/>
</dbReference>
<dbReference type="InterPro" id="IPR000077">
    <property type="entry name" value="Ribosomal_eL39"/>
</dbReference>
<dbReference type="InterPro" id="IPR020083">
    <property type="entry name" value="Ribosomal_eL39_CS"/>
</dbReference>
<dbReference type="InterPro" id="IPR023626">
    <property type="entry name" value="Ribosomal_eL39_dom_sf"/>
</dbReference>
<dbReference type="NCBIfam" id="NF002316">
    <property type="entry name" value="PRK01242.1"/>
    <property type="match status" value="1"/>
</dbReference>
<dbReference type="PANTHER" id="PTHR19970:SF0">
    <property type="entry name" value="LARGE RIBOSOMAL SUBUNIT PROTEIN EL39"/>
    <property type="match status" value="1"/>
</dbReference>
<dbReference type="PANTHER" id="PTHR19970">
    <property type="entry name" value="RIBOSOMAL PROTEIN L39E"/>
    <property type="match status" value="1"/>
</dbReference>
<dbReference type="Pfam" id="PF00832">
    <property type="entry name" value="Ribosomal_L39"/>
    <property type="match status" value="1"/>
</dbReference>
<dbReference type="SUPFAM" id="SSF48662">
    <property type="entry name" value="Ribosomal protein L39e"/>
    <property type="match status" value="1"/>
</dbReference>
<dbReference type="PROSITE" id="PS00051">
    <property type="entry name" value="RIBOSOMAL_L39E"/>
    <property type="match status" value="1"/>
</dbReference>
<gene>
    <name evidence="1" type="primary">rpl39e</name>
    <name type="ordered locus">YG5714_1869</name>
</gene>
<reference key="1">
    <citation type="journal article" date="2009" name="Proc. Natl. Acad. Sci. U.S.A.">
        <title>Biogeography of the Sulfolobus islandicus pan-genome.</title>
        <authorList>
            <person name="Reno M.L."/>
            <person name="Held N.L."/>
            <person name="Fields C.J."/>
            <person name="Burke P.V."/>
            <person name="Whitaker R.J."/>
        </authorList>
    </citation>
    <scope>NUCLEOTIDE SEQUENCE [LARGE SCALE GENOMIC DNA]</scope>
    <source>
        <strain>Y.G.57.14 / Yellowstone #1</strain>
    </source>
</reference>
<accession>C3N7D1</accession>
<feature type="chain" id="PRO_1000212326" description="Large ribosomal subunit protein eL39">
    <location>
        <begin position="1"/>
        <end position="51"/>
    </location>
</feature>
<name>RL39_SACI7</name>
<evidence type="ECO:0000255" key="1">
    <source>
        <dbReference type="HAMAP-Rule" id="MF_00629"/>
    </source>
</evidence>
<evidence type="ECO:0000305" key="2"/>
<sequence>MSRNKPVAKKFRLAKALKANSPIPIWIVLKTRGRVRYNPLRRNWRRNDLKV</sequence>
<proteinExistence type="inferred from homology"/>
<comment type="similarity">
    <text evidence="1">Belongs to the eukaryotic ribosomal protein eL39 family.</text>
</comment>